<evidence type="ECO:0000255" key="1">
    <source>
        <dbReference type="HAMAP-Rule" id="MF_00031"/>
    </source>
</evidence>
<gene>
    <name evidence="1" type="primary">ruvA</name>
    <name type="ordered locus">MAV_3474</name>
</gene>
<comment type="function">
    <text evidence="1">The RuvA-RuvB-RuvC complex processes Holliday junction (HJ) DNA during genetic recombination and DNA repair, while the RuvA-RuvB complex plays an important role in the rescue of blocked DNA replication forks via replication fork reversal (RFR). RuvA specifically binds to HJ cruciform DNA, conferring on it an open structure. The RuvB hexamer acts as an ATP-dependent pump, pulling dsDNA into and through the RuvAB complex. HJ branch migration allows RuvC to scan DNA until it finds its consensus sequence, where it cleaves and resolves the cruciform DNA.</text>
</comment>
<comment type="subunit">
    <text evidence="1">Homotetramer. Forms an RuvA(8)-RuvB(12)-Holliday junction (HJ) complex. HJ DNA is sandwiched between 2 RuvA tetramers; dsDNA enters through RuvA and exits via RuvB. An RuvB hexamer assembles on each DNA strand where it exits the tetramer. Each RuvB hexamer is contacted by two RuvA subunits (via domain III) on 2 adjacent RuvB subunits; this complex drives branch migration. In the full resolvosome a probable DNA-RuvA(4)-RuvB(12)-RuvC(2) complex forms which resolves the HJ.</text>
</comment>
<comment type="subcellular location">
    <subcellularLocation>
        <location evidence="1">Cytoplasm</location>
    </subcellularLocation>
</comment>
<comment type="domain">
    <text evidence="1">Has three domains with a flexible linker between the domains II and III and assumes an 'L' shape. Domain III is highly mobile and contacts RuvB.</text>
</comment>
<comment type="similarity">
    <text evidence="1">Belongs to the RuvA family.</text>
</comment>
<accession>A0QIB8</accession>
<dbReference type="EMBL" id="CP000479">
    <property type="protein sequence ID" value="ABK67193.1"/>
    <property type="molecule type" value="Genomic_DNA"/>
</dbReference>
<dbReference type="RefSeq" id="WP_003872685.1">
    <property type="nucleotide sequence ID" value="NC_008595.1"/>
</dbReference>
<dbReference type="SMR" id="A0QIB8"/>
<dbReference type="KEGG" id="mav:MAV_3474"/>
<dbReference type="HOGENOM" id="CLU_087936_2_1_11"/>
<dbReference type="Proteomes" id="UP000001574">
    <property type="component" value="Chromosome"/>
</dbReference>
<dbReference type="GO" id="GO:0005737">
    <property type="term" value="C:cytoplasm"/>
    <property type="evidence" value="ECO:0007669"/>
    <property type="project" value="UniProtKB-SubCell"/>
</dbReference>
<dbReference type="GO" id="GO:0009379">
    <property type="term" value="C:Holliday junction helicase complex"/>
    <property type="evidence" value="ECO:0007669"/>
    <property type="project" value="InterPro"/>
</dbReference>
<dbReference type="GO" id="GO:0048476">
    <property type="term" value="C:Holliday junction resolvase complex"/>
    <property type="evidence" value="ECO:0007669"/>
    <property type="project" value="UniProtKB-UniRule"/>
</dbReference>
<dbReference type="GO" id="GO:0005524">
    <property type="term" value="F:ATP binding"/>
    <property type="evidence" value="ECO:0007669"/>
    <property type="project" value="InterPro"/>
</dbReference>
<dbReference type="GO" id="GO:0000400">
    <property type="term" value="F:four-way junction DNA binding"/>
    <property type="evidence" value="ECO:0007669"/>
    <property type="project" value="UniProtKB-UniRule"/>
</dbReference>
<dbReference type="GO" id="GO:0009378">
    <property type="term" value="F:four-way junction helicase activity"/>
    <property type="evidence" value="ECO:0007669"/>
    <property type="project" value="InterPro"/>
</dbReference>
<dbReference type="GO" id="GO:0006310">
    <property type="term" value="P:DNA recombination"/>
    <property type="evidence" value="ECO:0007669"/>
    <property type="project" value="UniProtKB-UniRule"/>
</dbReference>
<dbReference type="GO" id="GO:0006281">
    <property type="term" value="P:DNA repair"/>
    <property type="evidence" value="ECO:0007669"/>
    <property type="project" value="UniProtKB-UniRule"/>
</dbReference>
<dbReference type="CDD" id="cd14332">
    <property type="entry name" value="UBA_RuvA_C"/>
    <property type="match status" value="1"/>
</dbReference>
<dbReference type="FunFam" id="2.40.50.140:FF:000083">
    <property type="entry name" value="Holliday junction ATP-dependent DNA helicase RuvA"/>
    <property type="match status" value="1"/>
</dbReference>
<dbReference type="Gene3D" id="1.10.150.20">
    <property type="entry name" value="5' to 3' exonuclease, C-terminal subdomain"/>
    <property type="match status" value="1"/>
</dbReference>
<dbReference type="Gene3D" id="1.10.8.10">
    <property type="entry name" value="DNA helicase RuvA subunit, C-terminal domain"/>
    <property type="match status" value="1"/>
</dbReference>
<dbReference type="Gene3D" id="2.40.50.140">
    <property type="entry name" value="Nucleic acid-binding proteins"/>
    <property type="match status" value="1"/>
</dbReference>
<dbReference type="HAMAP" id="MF_00031">
    <property type="entry name" value="DNA_HJ_migration_RuvA"/>
    <property type="match status" value="1"/>
</dbReference>
<dbReference type="InterPro" id="IPR013849">
    <property type="entry name" value="DNA_helicase_Holl-junc_RuvA_I"/>
</dbReference>
<dbReference type="InterPro" id="IPR012340">
    <property type="entry name" value="NA-bd_OB-fold"/>
</dbReference>
<dbReference type="InterPro" id="IPR000085">
    <property type="entry name" value="RuvA"/>
</dbReference>
<dbReference type="InterPro" id="IPR010994">
    <property type="entry name" value="RuvA_2-like"/>
</dbReference>
<dbReference type="InterPro" id="IPR011114">
    <property type="entry name" value="RuvA_C"/>
</dbReference>
<dbReference type="InterPro" id="IPR036267">
    <property type="entry name" value="RuvA_C_sf"/>
</dbReference>
<dbReference type="NCBIfam" id="TIGR00084">
    <property type="entry name" value="ruvA"/>
    <property type="match status" value="1"/>
</dbReference>
<dbReference type="Pfam" id="PF14520">
    <property type="entry name" value="HHH_5"/>
    <property type="match status" value="1"/>
</dbReference>
<dbReference type="Pfam" id="PF07499">
    <property type="entry name" value="RuvA_C"/>
    <property type="match status" value="1"/>
</dbReference>
<dbReference type="Pfam" id="PF01330">
    <property type="entry name" value="RuvA_N"/>
    <property type="match status" value="1"/>
</dbReference>
<dbReference type="SUPFAM" id="SSF46929">
    <property type="entry name" value="DNA helicase RuvA subunit, C-terminal domain"/>
    <property type="match status" value="1"/>
</dbReference>
<dbReference type="SUPFAM" id="SSF50249">
    <property type="entry name" value="Nucleic acid-binding proteins"/>
    <property type="match status" value="1"/>
</dbReference>
<dbReference type="SUPFAM" id="SSF47781">
    <property type="entry name" value="RuvA domain 2-like"/>
    <property type="match status" value="1"/>
</dbReference>
<keyword id="KW-0963">Cytoplasm</keyword>
<keyword id="KW-0227">DNA damage</keyword>
<keyword id="KW-0233">DNA recombination</keyword>
<keyword id="KW-0234">DNA repair</keyword>
<keyword id="KW-0238">DNA-binding</keyword>
<sequence>MIASVRGEVLEVALDHAVIEAAGVGYRVNATPSTLSTLRTGTQARLITAMIVREDSMTLYGFTDAETRDLFLTLLSVSGVGPRLAMATLAVHDAGALRQALHDGDVAALTRVPGIGKRGAERMVLELRDKIGAAGAAGAPAGAARNGHAVRGPVVEALVGLGFAAKQAEEATDKVLAAEPEAGTSGALRAALSLLGKSR</sequence>
<organism>
    <name type="scientific">Mycobacterium avium (strain 104)</name>
    <dbReference type="NCBI Taxonomy" id="243243"/>
    <lineage>
        <taxon>Bacteria</taxon>
        <taxon>Bacillati</taxon>
        <taxon>Actinomycetota</taxon>
        <taxon>Actinomycetes</taxon>
        <taxon>Mycobacteriales</taxon>
        <taxon>Mycobacteriaceae</taxon>
        <taxon>Mycobacterium</taxon>
        <taxon>Mycobacterium avium complex (MAC)</taxon>
    </lineage>
</organism>
<proteinExistence type="inferred from homology"/>
<feature type="chain" id="PRO_1000002487" description="Holliday junction branch migration complex subunit RuvA">
    <location>
        <begin position="1"/>
        <end position="199"/>
    </location>
</feature>
<feature type="region of interest" description="Domain I" evidence="1">
    <location>
        <begin position="1"/>
        <end position="63"/>
    </location>
</feature>
<feature type="region of interest" description="Domain II" evidence="1">
    <location>
        <begin position="64"/>
        <end position="142"/>
    </location>
</feature>
<feature type="region of interest" description="Flexible linker" evidence="1">
    <location>
        <begin position="143"/>
        <end position="153"/>
    </location>
</feature>
<feature type="region of interest" description="Domain III" evidence="1">
    <location>
        <begin position="153"/>
        <end position="199"/>
    </location>
</feature>
<protein>
    <recommendedName>
        <fullName evidence="1">Holliday junction branch migration complex subunit RuvA</fullName>
    </recommendedName>
</protein>
<reference key="1">
    <citation type="submission" date="2006-10" db="EMBL/GenBank/DDBJ databases">
        <authorList>
            <person name="Fleischmann R.D."/>
            <person name="Dodson R.J."/>
            <person name="Haft D.H."/>
            <person name="Merkel J.S."/>
            <person name="Nelson W.C."/>
            <person name="Fraser C.M."/>
        </authorList>
    </citation>
    <scope>NUCLEOTIDE SEQUENCE [LARGE SCALE GENOMIC DNA]</scope>
    <source>
        <strain>104</strain>
    </source>
</reference>
<name>RUVA_MYCA1</name>